<evidence type="ECO:0000255" key="1">
    <source>
        <dbReference type="HAMAP-Rule" id="MF_00083"/>
    </source>
</evidence>
<protein>
    <recommendedName>
        <fullName evidence="1">Peptidyl-tRNA hydrolase</fullName>
        <shortName evidence="1">Pth</shortName>
        <ecNumber evidence="1">3.1.1.29</ecNumber>
    </recommendedName>
</protein>
<sequence length="198" mass="21870">MTSQIKLIVGLGNPGPEYAKTRHNAGAWYVEQLARWHNVSLREEPKFFGHTARIQVDGQDVRLLIPNTYMNLSGKAVAALARFYQIEPEAMLVAHDELDLPPGIAKFKQGGGHGGHNGLKDIIARMGNNNNFFRLRLGIGHPGTKELVAGFVLTKAPSSEQSLIDAALDESLRATDILFKQDMTKAMNRLHSFKAEKV</sequence>
<dbReference type="EC" id="3.1.1.29" evidence="1"/>
<dbReference type="EMBL" id="CP000462">
    <property type="protein sequence ID" value="ABK39144.1"/>
    <property type="molecule type" value="Genomic_DNA"/>
</dbReference>
<dbReference type="RefSeq" id="WP_011706941.1">
    <property type="nucleotide sequence ID" value="NC_008570.1"/>
</dbReference>
<dbReference type="RefSeq" id="YP_857655.1">
    <property type="nucleotide sequence ID" value="NC_008570.1"/>
</dbReference>
<dbReference type="SMR" id="A0KN04"/>
<dbReference type="STRING" id="380703.AHA_3156"/>
<dbReference type="EnsemblBacteria" id="ABK39144">
    <property type="protein sequence ID" value="ABK39144"/>
    <property type="gene ID" value="AHA_3156"/>
</dbReference>
<dbReference type="GeneID" id="4489660"/>
<dbReference type="KEGG" id="aha:AHA_3156"/>
<dbReference type="PATRIC" id="fig|380703.7.peg.3156"/>
<dbReference type="eggNOG" id="COG0193">
    <property type="taxonomic scope" value="Bacteria"/>
</dbReference>
<dbReference type="HOGENOM" id="CLU_062456_3_1_6"/>
<dbReference type="OrthoDB" id="9800507at2"/>
<dbReference type="Proteomes" id="UP000000756">
    <property type="component" value="Chromosome"/>
</dbReference>
<dbReference type="GO" id="GO:0005737">
    <property type="term" value="C:cytoplasm"/>
    <property type="evidence" value="ECO:0007669"/>
    <property type="project" value="UniProtKB-SubCell"/>
</dbReference>
<dbReference type="GO" id="GO:0004045">
    <property type="term" value="F:peptidyl-tRNA hydrolase activity"/>
    <property type="evidence" value="ECO:0007669"/>
    <property type="project" value="UniProtKB-UniRule"/>
</dbReference>
<dbReference type="GO" id="GO:0000049">
    <property type="term" value="F:tRNA binding"/>
    <property type="evidence" value="ECO:0007669"/>
    <property type="project" value="UniProtKB-UniRule"/>
</dbReference>
<dbReference type="GO" id="GO:0006515">
    <property type="term" value="P:protein quality control for misfolded or incompletely synthesized proteins"/>
    <property type="evidence" value="ECO:0007669"/>
    <property type="project" value="UniProtKB-UniRule"/>
</dbReference>
<dbReference type="GO" id="GO:0072344">
    <property type="term" value="P:rescue of stalled ribosome"/>
    <property type="evidence" value="ECO:0007669"/>
    <property type="project" value="UniProtKB-UniRule"/>
</dbReference>
<dbReference type="CDD" id="cd00462">
    <property type="entry name" value="PTH"/>
    <property type="match status" value="1"/>
</dbReference>
<dbReference type="FunFam" id="3.40.50.1470:FF:000001">
    <property type="entry name" value="Peptidyl-tRNA hydrolase"/>
    <property type="match status" value="1"/>
</dbReference>
<dbReference type="Gene3D" id="3.40.50.1470">
    <property type="entry name" value="Peptidyl-tRNA hydrolase"/>
    <property type="match status" value="1"/>
</dbReference>
<dbReference type="HAMAP" id="MF_00083">
    <property type="entry name" value="Pept_tRNA_hydro_bact"/>
    <property type="match status" value="1"/>
</dbReference>
<dbReference type="InterPro" id="IPR001328">
    <property type="entry name" value="Pept_tRNA_hydro"/>
</dbReference>
<dbReference type="InterPro" id="IPR018171">
    <property type="entry name" value="Pept_tRNA_hydro_CS"/>
</dbReference>
<dbReference type="InterPro" id="IPR036416">
    <property type="entry name" value="Pept_tRNA_hydro_sf"/>
</dbReference>
<dbReference type="NCBIfam" id="TIGR00447">
    <property type="entry name" value="pth"/>
    <property type="match status" value="1"/>
</dbReference>
<dbReference type="PANTHER" id="PTHR17224">
    <property type="entry name" value="PEPTIDYL-TRNA HYDROLASE"/>
    <property type="match status" value="1"/>
</dbReference>
<dbReference type="PANTHER" id="PTHR17224:SF1">
    <property type="entry name" value="PEPTIDYL-TRNA HYDROLASE"/>
    <property type="match status" value="1"/>
</dbReference>
<dbReference type="Pfam" id="PF01195">
    <property type="entry name" value="Pept_tRNA_hydro"/>
    <property type="match status" value="1"/>
</dbReference>
<dbReference type="SUPFAM" id="SSF53178">
    <property type="entry name" value="Peptidyl-tRNA hydrolase-like"/>
    <property type="match status" value="1"/>
</dbReference>
<dbReference type="PROSITE" id="PS01195">
    <property type="entry name" value="PEPT_TRNA_HYDROL_1"/>
    <property type="match status" value="1"/>
</dbReference>
<dbReference type="PROSITE" id="PS01196">
    <property type="entry name" value="PEPT_TRNA_HYDROL_2"/>
    <property type="match status" value="1"/>
</dbReference>
<reference key="1">
    <citation type="journal article" date="2006" name="J. Bacteriol.">
        <title>Genome sequence of Aeromonas hydrophila ATCC 7966T: jack of all trades.</title>
        <authorList>
            <person name="Seshadri R."/>
            <person name="Joseph S.W."/>
            <person name="Chopra A.K."/>
            <person name="Sha J."/>
            <person name="Shaw J."/>
            <person name="Graf J."/>
            <person name="Haft D.H."/>
            <person name="Wu M."/>
            <person name="Ren Q."/>
            <person name="Rosovitz M.J."/>
            <person name="Madupu R."/>
            <person name="Tallon L."/>
            <person name="Kim M."/>
            <person name="Jin S."/>
            <person name="Vuong H."/>
            <person name="Stine O.C."/>
            <person name="Ali A."/>
            <person name="Horneman A.J."/>
            <person name="Heidelberg J.F."/>
        </authorList>
    </citation>
    <scope>NUCLEOTIDE SEQUENCE [LARGE SCALE GENOMIC DNA]</scope>
    <source>
        <strain>ATCC 7966 / DSM 30187 / BCRC 13018 / CCUG 14551 / JCM 1027 / KCTC 2358 / NCIMB 9240 / NCTC 8049</strain>
    </source>
</reference>
<proteinExistence type="inferred from homology"/>
<feature type="chain" id="PRO_1000010557" description="Peptidyl-tRNA hydrolase">
    <location>
        <begin position="1"/>
        <end position="198"/>
    </location>
</feature>
<feature type="active site" description="Proton acceptor" evidence="1">
    <location>
        <position position="23"/>
    </location>
</feature>
<feature type="binding site" evidence="1">
    <location>
        <position position="18"/>
    </location>
    <ligand>
        <name>tRNA</name>
        <dbReference type="ChEBI" id="CHEBI:17843"/>
    </ligand>
</feature>
<feature type="binding site" evidence="1">
    <location>
        <position position="69"/>
    </location>
    <ligand>
        <name>tRNA</name>
        <dbReference type="ChEBI" id="CHEBI:17843"/>
    </ligand>
</feature>
<feature type="binding site" evidence="1">
    <location>
        <position position="71"/>
    </location>
    <ligand>
        <name>tRNA</name>
        <dbReference type="ChEBI" id="CHEBI:17843"/>
    </ligand>
</feature>
<feature type="binding site" evidence="1">
    <location>
        <position position="117"/>
    </location>
    <ligand>
        <name>tRNA</name>
        <dbReference type="ChEBI" id="CHEBI:17843"/>
    </ligand>
</feature>
<feature type="site" description="Discriminates between blocked and unblocked aminoacyl-tRNA" evidence="1">
    <location>
        <position position="13"/>
    </location>
</feature>
<feature type="site" description="Stabilizes the basic form of H active site to accept a proton" evidence="1">
    <location>
        <position position="96"/>
    </location>
</feature>
<accession>A0KN04</accession>
<organism>
    <name type="scientific">Aeromonas hydrophila subsp. hydrophila (strain ATCC 7966 / DSM 30187 / BCRC 13018 / CCUG 14551 / JCM 1027 / KCTC 2358 / NCIMB 9240 / NCTC 8049)</name>
    <dbReference type="NCBI Taxonomy" id="380703"/>
    <lineage>
        <taxon>Bacteria</taxon>
        <taxon>Pseudomonadati</taxon>
        <taxon>Pseudomonadota</taxon>
        <taxon>Gammaproteobacteria</taxon>
        <taxon>Aeromonadales</taxon>
        <taxon>Aeromonadaceae</taxon>
        <taxon>Aeromonas</taxon>
    </lineage>
</organism>
<keyword id="KW-0963">Cytoplasm</keyword>
<keyword id="KW-0378">Hydrolase</keyword>
<keyword id="KW-1185">Reference proteome</keyword>
<keyword id="KW-0694">RNA-binding</keyword>
<keyword id="KW-0820">tRNA-binding</keyword>
<gene>
    <name evidence="1" type="primary">pth</name>
    <name type="ordered locus">AHA_3156</name>
</gene>
<comment type="function">
    <text evidence="1">Hydrolyzes ribosome-free peptidyl-tRNAs (with 1 or more amino acids incorporated), which drop off the ribosome during protein synthesis, or as a result of ribosome stalling.</text>
</comment>
<comment type="function">
    <text evidence="1">Catalyzes the release of premature peptidyl moieties from peptidyl-tRNA molecules trapped in stalled 50S ribosomal subunits, and thus maintains levels of free tRNAs and 50S ribosomes.</text>
</comment>
<comment type="catalytic activity">
    <reaction evidence="1">
        <text>an N-acyl-L-alpha-aminoacyl-tRNA + H2O = an N-acyl-L-amino acid + a tRNA + H(+)</text>
        <dbReference type="Rhea" id="RHEA:54448"/>
        <dbReference type="Rhea" id="RHEA-COMP:10123"/>
        <dbReference type="Rhea" id="RHEA-COMP:13883"/>
        <dbReference type="ChEBI" id="CHEBI:15377"/>
        <dbReference type="ChEBI" id="CHEBI:15378"/>
        <dbReference type="ChEBI" id="CHEBI:59874"/>
        <dbReference type="ChEBI" id="CHEBI:78442"/>
        <dbReference type="ChEBI" id="CHEBI:138191"/>
        <dbReference type="EC" id="3.1.1.29"/>
    </reaction>
</comment>
<comment type="subunit">
    <text evidence="1">Monomer.</text>
</comment>
<comment type="subcellular location">
    <subcellularLocation>
        <location evidence="1">Cytoplasm</location>
    </subcellularLocation>
</comment>
<comment type="similarity">
    <text evidence="1">Belongs to the PTH family.</text>
</comment>
<name>PTH_AERHH</name>